<comment type="similarity">
    <text evidence="2">Belongs to the CbbQ/NirQ/NorQ/GpvN family.</text>
</comment>
<proteinExistence type="inferred from homology"/>
<keyword id="KW-0067">ATP-binding</keyword>
<keyword id="KW-0547">Nucleotide-binding</keyword>
<organism>
    <name type="scientific">Staphylococcus aureus (strain MSSA476)</name>
    <dbReference type="NCBI Taxonomy" id="282459"/>
    <lineage>
        <taxon>Bacteria</taxon>
        <taxon>Bacillati</taxon>
        <taxon>Bacillota</taxon>
        <taxon>Bacilli</taxon>
        <taxon>Bacillales</taxon>
        <taxon>Staphylococcaceae</taxon>
        <taxon>Staphylococcus</taxon>
    </lineage>
</organism>
<accession>Q6G9F2</accession>
<gene>
    <name type="ordered locus">SAS1352</name>
</gene>
<sequence length="263" mass="29449">MALKHYKNSDSTVFNDAKALFDLNKNILLKGPTGSGKTKLAETLSEVVDTPMHQVNCSVDLDTESLLGFKTIKTNAEGQQEIVFVDGPVIKAMKEGHILYIDEINMAKPETLPVLNGVLDYRRQITNPYTGEVIKAVPGFNVIAAINEGYVGTLPMNEALKNRFVVIHVDYIDGDILKNVIKEQSLLQDDKQIEQIIKFNEDLRTMSKQGQISEEAASIRALLDLCDLITVMPVERAIKRTIIDKLEDEREQQAIYNAVELNF</sequence>
<feature type="chain" id="PRO_0000284808" description="Uncharacterized protein SAS1352">
    <location>
        <begin position="1"/>
        <end position="263"/>
    </location>
</feature>
<feature type="binding site" evidence="1">
    <location>
        <begin position="31"/>
        <end position="38"/>
    </location>
    <ligand>
        <name>ATP</name>
        <dbReference type="ChEBI" id="CHEBI:30616"/>
    </ligand>
</feature>
<name>Y1352_STAAS</name>
<evidence type="ECO:0000255" key="1"/>
<evidence type="ECO:0000305" key="2"/>
<protein>
    <recommendedName>
        <fullName>Uncharacterized protein SAS1352</fullName>
    </recommendedName>
</protein>
<reference key="1">
    <citation type="journal article" date="2004" name="Proc. Natl. Acad. Sci. U.S.A.">
        <title>Complete genomes of two clinical Staphylococcus aureus strains: evidence for the rapid evolution of virulence and drug resistance.</title>
        <authorList>
            <person name="Holden M.T.G."/>
            <person name="Feil E.J."/>
            <person name="Lindsay J.A."/>
            <person name="Peacock S.J."/>
            <person name="Day N.P.J."/>
            <person name="Enright M.C."/>
            <person name="Foster T.J."/>
            <person name="Moore C.E."/>
            <person name="Hurst L."/>
            <person name="Atkin R."/>
            <person name="Barron A."/>
            <person name="Bason N."/>
            <person name="Bentley S.D."/>
            <person name="Chillingworth C."/>
            <person name="Chillingworth T."/>
            <person name="Churcher C."/>
            <person name="Clark L."/>
            <person name="Corton C."/>
            <person name="Cronin A."/>
            <person name="Doggett J."/>
            <person name="Dowd L."/>
            <person name="Feltwell T."/>
            <person name="Hance Z."/>
            <person name="Harris B."/>
            <person name="Hauser H."/>
            <person name="Holroyd S."/>
            <person name="Jagels K."/>
            <person name="James K.D."/>
            <person name="Lennard N."/>
            <person name="Line A."/>
            <person name="Mayes R."/>
            <person name="Moule S."/>
            <person name="Mungall K."/>
            <person name="Ormond D."/>
            <person name="Quail M.A."/>
            <person name="Rabbinowitsch E."/>
            <person name="Rutherford K.M."/>
            <person name="Sanders M."/>
            <person name="Sharp S."/>
            <person name="Simmonds M."/>
            <person name="Stevens K."/>
            <person name="Whitehead S."/>
            <person name="Barrell B.G."/>
            <person name="Spratt B.G."/>
            <person name="Parkhill J."/>
        </authorList>
    </citation>
    <scope>NUCLEOTIDE SEQUENCE [LARGE SCALE GENOMIC DNA]</scope>
    <source>
        <strain>MSSA476</strain>
    </source>
</reference>
<dbReference type="EMBL" id="BX571857">
    <property type="protein sequence ID" value="CAG43127.1"/>
    <property type="molecule type" value="Genomic_DNA"/>
</dbReference>
<dbReference type="RefSeq" id="WP_001185421.1">
    <property type="nucleotide sequence ID" value="NC_002953.3"/>
</dbReference>
<dbReference type="SMR" id="Q6G9F2"/>
<dbReference type="KEGG" id="sas:SAS1352"/>
<dbReference type="HOGENOM" id="CLU_080347_0_0_9"/>
<dbReference type="GO" id="GO:0005524">
    <property type="term" value="F:ATP binding"/>
    <property type="evidence" value="ECO:0007669"/>
    <property type="project" value="UniProtKB-KW"/>
</dbReference>
<dbReference type="GO" id="GO:0016887">
    <property type="term" value="F:ATP hydrolysis activity"/>
    <property type="evidence" value="ECO:0007669"/>
    <property type="project" value="InterPro"/>
</dbReference>
<dbReference type="CDD" id="cd00009">
    <property type="entry name" value="AAA"/>
    <property type="match status" value="1"/>
</dbReference>
<dbReference type="Gene3D" id="3.40.50.300">
    <property type="entry name" value="P-loop containing nucleotide triphosphate hydrolases"/>
    <property type="match status" value="1"/>
</dbReference>
<dbReference type="InterPro" id="IPR011704">
    <property type="entry name" value="ATPase_dyneun-rel_AAA"/>
</dbReference>
<dbReference type="InterPro" id="IPR050764">
    <property type="entry name" value="CbbQ/NirQ/NorQ/GpvN"/>
</dbReference>
<dbReference type="InterPro" id="IPR013615">
    <property type="entry name" value="CbbQ_C"/>
</dbReference>
<dbReference type="InterPro" id="IPR001270">
    <property type="entry name" value="ClpA/B"/>
</dbReference>
<dbReference type="InterPro" id="IPR027417">
    <property type="entry name" value="P-loop_NTPase"/>
</dbReference>
<dbReference type="PANTHER" id="PTHR42759:SF1">
    <property type="entry name" value="MAGNESIUM-CHELATASE SUBUNIT CHLD"/>
    <property type="match status" value="1"/>
</dbReference>
<dbReference type="PANTHER" id="PTHR42759">
    <property type="entry name" value="MOXR FAMILY PROTEIN"/>
    <property type="match status" value="1"/>
</dbReference>
<dbReference type="Pfam" id="PF07728">
    <property type="entry name" value="AAA_5"/>
    <property type="match status" value="1"/>
</dbReference>
<dbReference type="Pfam" id="PF08406">
    <property type="entry name" value="CbbQ_C"/>
    <property type="match status" value="1"/>
</dbReference>
<dbReference type="PRINTS" id="PR00300">
    <property type="entry name" value="CLPPROTEASEA"/>
</dbReference>
<dbReference type="SUPFAM" id="SSF52540">
    <property type="entry name" value="P-loop containing nucleoside triphosphate hydrolases"/>
    <property type="match status" value="1"/>
</dbReference>